<name>AMPP1_BOTFB</name>
<dbReference type="EC" id="3.4.11.9"/>
<dbReference type="EMBL" id="CP009807">
    <property type="protein sequence ID" value="ATZ48301.1"/>
    <property type="molecule type" value="Genomic_DNA"/>
</dbReference>
<dbReference type="EMBL" id="CP009807">
    <property type="protein sequence ID" value="ATZ48302.1"/>
    <property type="molecule type" value="Genomic_DNA"/>
</dbReference>
<dbReference type="EMBL" id="CP009807">
    <property type="protein sequence ID" value="ATZ48303.1"/>
    <property type="molecule type" value="Genomic_DNA"/>
</dbReference>
<dbReference type="SMR" id="A6RK67"/>
<dbReference type="EnsemblFungi" id="Bcin03g05300.1">
    <molecule id="A6RK67-1"/>
    <property type="protein sequence ID" value="Bcin03p05300.1"/>
    <property type="gene ID" value="Bcin03g05300"/>
</dbReference>
<dbReference type="EnsemblFungi" id="Bcin03g05300.2">
    <molecule id="A6RK67-1"/>
    <property type="protein sequence ID" value="Bcin03p05300.2"/>
    <property type="gene ID" value="Bcin03g05300"/>
</dbReference>
<dbReference type="EnsemblFungi" id="Bcin03g05300.3">
    <molecule id="A6RK67-2"/>
    <property type="protein sequence ID" value="Bcin03p05300.3"/>
    <property type="gene ID" value="Bcin03g05300"/>
</dbReference>
<dbReference type="VEuPathDB" id="FungiDB:Bcin03g05300"/>
<dbReference type="OrthoDB" id="9995434at2759"/>
<dbReference type="Proteomes" id="UP000001798">
    <property type="component" value="Chromosome bcin03"/>
</dbReference>
<dbReference type="GO" id="GO:0005737">
    <property type="term" value="C:cytoplasm"/>
    <property type="evidence" value="ECO:0007669"/>
    <property type="project" value="UniProtKB-ARBA"/>
</dbReference>
<dbReference type="GO" id="GO:0046872">
    <property type="term" value="F:metal ion binding"/>
    <property type="evidence" value="ECO:0007669"/>
    <property type="project" value="UniProtKB-KW"/>
</dbReference>
<dbReference type="GO" id="GO:0070006">
    <property type="term" value="F:metalloaminopeptidase activity"/>
    <property type="evidence" value="ECO:0007669"/>
    <property type="project" value="InterPro"/>
</dbReference>
<dbReference type="GO" id="GO:0006508">
    <property type="term" value="P:proteolysis"/>
    <property type="evidence" value="ECO:0007669"/>
    <property type="project" value="UniProtKB-KW"/>
</dbReference>
<dbReference type="CDD" id="cd01085">
    <property type="entry name" value="APP"/>
    <property type="match status" value="1"/>
</dbReference>
<dbReference type="FunFam" id="3.40.350.10:FF:000010">
    <property type="entry name" value="Probable Xaa-Pro aminopeptidase P"/>
    <property type="match status" value="1"/>
</dbReference>
<dbReference type="FunFam" id="3.90.230.10:FF:000007">
    <property type="entry name" value="Xaa-Pro aminopeptidase P"/>
    <property type="match status" value="1"/>
</dbReference>
<dbReference type="FunFam" id="3.40.350.10:FF:000003">
    <property type="entry name" value="Xaa-pro aminopeptidase P"/>
    <property type="match status" value="1"/>
</dbReference>
<dbReference type="Gene3D" id="3.90.230.10">
    <property type="entry name" value="Creatinase/methionine aminopeptidase superfamily"/>
    <property type="match status" value="1"/>
</dbReference>
<dbReference type="Gene3D" id="3.40.350.10">
    <property type="entry name" value="Creatinase/prolidase N-terminal domain"/>
    <property type="match status" value="2"/>
</dbReference>
<dbReference type="InterPro" id="IPR029149">
    <property type="entry name" value="Creatin/AminoP/Spt16_N"/>
</dbReference>
<dbReference type="InterPro" id="IPR036005">
    <property type="entry name" value="Creatinase/aminopeptidase-like"/>
</dbReference>
<dbReference type="InterPro" id="IPR000587">
    <property type="entry name" value="Creatinase_N"/>
</dbReference>
<dbReference type="InterPro" id="IPR000994">
    <property type="entry name" value="Pept_M24"/>
</dbReference>
<dbReference type="InterPro" id="IPR033740">
    <property type="entry name" value="Pept_M24B"/>
</dbReference>
<dbReference type="InterPro" id="IPR032416">
    <property type="entry name" value="Peptidase_M24_C"/>
</dbReference>
<dbReference type="InterPro" id="IPR001131">
    <property type="entry name" value="Peptidase_M24B_aminopep-P_CS"/>
</dbReference>
<dbReference type="InterPro" id="IPR050422">
    <property type="entry name" value="X-Pro_aminopeptidase_P"/>
</dbReference>
<dbReference type="PANTHER" id="PTHR43763">
    <property type="entry name" value="XAA-PRO AMINOPEPTIDASE 1"/>
    <property type="match status" value="1"/>
</dbReference>
<dbReference type="PANTHER" id="PTHR43763:SF6">
    <property type="entry name" value="XAA-PRO AMINOPEPTIDASE 1"/>
    <property type="match status" value="1"/>
</dbReference>
<dbReference type="Pfam" id="PF01321">
    <property type="entry name" value="Creatinase_N"/>
    <property type="match status" value="1"/>
</dbReference>
<dbReference type="Pfam" id="PF16189">
    <property type="entry name" value="Creatinase_N_2"/>
    <property type="match status" value="1"/>
</dbReference>
<dbReference type="Pfam" id="PF00557">
    <property type="entry name" value="Peptidase_M24"/>
    <property type="match status" value="1"/>
</dbReference>
<dbReference type="Pfam" id="PF16188">
    <property type="entry name" value="Peptidase_M24_C"/>
    <property type="match status" value="1"/>
</dbReference>
<dbReference type="SUPFAM" id="SSF55920">
    <property type="entry name" value="Creatinase/aminopeptidase"/>
    <property type="match status" value="1"/>
</dbReference>
<dbReference type="SUPFAM" id="SSF53092">
    <property type="entry name" value="Creatinase/prolidase N-terminal domain"/>
    <property type="match status" value="1"/>
</dbReference>
<dbReference type="PROSITE" id="PS00491">
    <property type="entry name" value="PROLINE_PEPTIDASE"/>
    <property type="match status" value="1"/>
</dbReference>
<feature type="chain" id="PRO_0000411785" description="Probable Xaa-Pro aminopeptidase P">
    <location>
        <begin position="1"/>
        <end position="654"/>
    </location>
</feature>
<feature type="binding site" evidence="1">
    <location>
        <position position="451"/>
    </location>
    <ligand>
        <name>Mn(2+)</name>
        <dbReference type="ChEBI" id="CHEBI:29035"/>
        <label>2</label>
    </ligand>
</feature>
<feature type="binding site" evidence="1">
    <location>
        <position position="462"/>
    </location>
    <ligand>
        <name>Mn(2+)</name>
        <dbReference type="ChEBI" id="CHEBI:29035"/>
        <label>1</label>
    </ligand>
</feature>
<feature type="binding site" evidence="1">
    <location>
        <position position="462"/>
    </location>
    <ligand>
        <name>Mn(2+)</name>
        <dbReference type="ChEBI" id="CHEBI:29035"/>
        <label>2</label>
    </ligand>
</feature>
<feature type="binding site" evidence="1">
    <location>
        <position position="560"/>
    </location>
    <ligand>
        <name>Mn(2+)</name>
        <dbReference type="ChEBI" id="CHEBI:29035"/>
        <label>1</label>
    </ligand>
</feature>
<feature type="binding site" evidence="1">
    <location>
        <position position="574"/>
    </location>
    <ligand>
        <name>Mn(2+)</name>
        <dbReference type="ChEBI" id="CHEBI:29035"/>
        <label>1</label>
    </ligand>
</feature>
<feature type="binding site" evidence="1">
    <location>
        <position position="574"/>
    </location>
    <ligand>
        <name>Mn(2+)</name>
        <dbReference type="ChEBI" id="CHEBI:29035"/>
        <label>2</label>
    </ligand>
</feature>
<feature type="splice variant" id="VSP_062331" description="In isoform 2.">
    <original>MRYLRPLNSCLRGIRSGS</original>
    <variation>MCRRGSSSSWPYRKIVLD</variation>
    <location>
        <begin position="1"/>
        <end position="18"/>
    </location>
</feature>
<protein>
    <recommendedName>
        <fullName>Probable Xaa-Pro aminopeptidase P</fullName>
        <shortName>AMPP</shortName>
        <shortName>Aminopeptidase P</shortName>
        <ecNumber>3.4.11.9</ecNumber>
    </recommendedName>
    <alternativeName>
        <fullName>Aminoacylproline aminopeptidase</fullName>
    </alternativeName>
    <alternativeName>
        <fullName>Prolidase</fullName>
    </alternativeName>
</protein>
<comment type="function">
    <text evidence="1">Catalyzes the removal of a penultimate prolyl residue from the N-termini of peptides.</text>
</comment>
<comment type="catalytic activity">
    <reaction>
        <text>Release of any N-terminal amino acid, including proline, that is linked to proline, even from a dipeptide or tripeptide.</text>
        <dbReference type="EC" id="3.4.11.9"/>
    </reaction>
</comment>
<comment type="cofactor">
    <cofactor evidence="1">
        <name>Mn(2+)</name>
        <dbReference type="ChEBI" id="CHEBI:29035"/>
    </cofactor>
    <text evidence="1">Binds 2 manganese ions per subunit.</text>
</comment>
<comment type="alternative products">
    <event type="alternative splicing"/>
    <isoform>
        <id>A6RK67-1</id>
        <name>1</name>
        <sequence type="displayed"/>
    </isoform>
    <isoform>
        <id>A6RK67-2</id>
        <name>2</name>
        <sequence type="described" ref="VSP_062331"/>
    </isoform>
</comment>
<comment type="similarity">
    <text evidence="2">Belongs to the peptidase M24B family.</text>
</comment>
<accession>A6RK67</accession>
<accession>A0A384JCU5</accession>
<accession>A0A384JCW6</accession>
<keyword id="KW-0025">Alternative splicing</keyword>
<keyword id="KW-0031">Aminopeptidase</keyword>
<keyword id="KW-0378">Hydrolase</keyword>
<keyword id="KW-0464">Manganese</keyword>
<keyword id="KW-0479">Metal-binding</keyword>
<keyword id="KW-0482">Metalloprotease</keyword>
<keyword id="KW-0645">Protease</keyword>
<keyword id="KW-1185">Reference proteome</keyword>
<sequence>MRYLRPLNSCLRGIRSGSSFQPLAQSLNTRIRYSSSFAKTDMESINTTERLAGLRELMKKNKVDIYIVPSEDSHSSEYIAACDARREFISGFSGSAGCAVVTLEKAALATDGRYFNQASRQLDNNWLLLKQGLQDVPTWQEWAAEQSENGKVVGVDPTIMSASDARKLTEKIKKRGGNDLVAVEENLVDLVWGDSRPSRPKEPVKVLARKFAGKDVKTKLEDLRKELLKKKSSGLIVSMLDEIAWLFNLRGNDIPYNPVFFSYASVTSSSATLYVDSSKLSDECTAHLNENGVSVRDYSKIFGDAEVLSQSLDAEDTKVKKFLVSSRASWALKRALGGDAKVDEVRSPIGDAKSVKNETELEGMRACHVRDGAALIEYFAWLEHQLVVEKVKMDEVTAADRLEQLRSKQKNFVGLSFDTISSTGPNAAVIHYKPEPGNCSIIDPNAVYLCDSGAQYFDGTTDTTRTLHFGEPTEMEKKAYTLVLKGNIALDVAIFPKGTSGFALDVLARQFLWEEGLDYRHGTGHGVGSFLNVHEGPIGIGTRIQYSEVPLAPGNVISNEPGYYEDGSFGIRIENIIMVKEIETKHQFGEKPYLGFEHVTMVPYCRKLIDETLLTRKEKHWLNEYHADIYSKTKDFFKGDELTMSWLEREIEPL</sequence>
<organism>
    <name type="scientific">Botryotinia fuckeliana (strain B05.10)</name>
    <name type="common">Noble rot fungus</name>
    <name type="synonym">Botrytis cinerea</name>
    <dbReference type="NCBI Taxonomy" id="332648"/>
    <lineage>
        <taxon>Eukaryota</taxon>
        <taxon>Fungi</taxon>
        <taxon>Dikarya</taxon>
        <taxon>Ascomycota</taxon>
        <taxon>Pezizomycotina</taxon>
        <taxon>Leotiomycetes</taxon>
        <taxon>Helotiales</taxon>
        <taxon>Sclerotiniaceae</taxon>
        <taxon>Botrytis</taxon>
    </lineage>
</organism>
<gene>
    <name type="primary">ampp</name>
    <name type="ORF">BC1G_00838</name>
    <name type="ORF">BCIN_03g05300</name>
</gene>
<evidence type="ECO:0000250" key="1"/>
<evidence type="ECO:0000305" key="2"/>
<reference key="1">
    <citation type="journal article" date="2011" name="PLoS Genet.">
        <title>Genomic analysis of the necrotrophic fungal pathogens Sclerotinia sclerotiorum and Botrytis cinerea.</title>
        <authorList>
            <person name="Amselem J."/>
            <person name="Cuomo C.A."/>
            <person name="van Kan J.A.L."/>
            <person name="Viaud M."/>
            <person name="Benito E.P."/>
            <person name="Couloux A."/>
            <person name="Coutinho P.M."/>
            <person name="de Vries R.P."/>
            <person name="Dyer P.S."/>
            <person name="Fillinger S."/>
            <person name="Fournier E."/>
            <person name="Gout L."/>
            <person name="Hahn M."/>
            <person name="Kohn L."/>
            <person name="Lapalu N."/>
            <person name="Plummer K.M."/>
            <person name="Pradier J.-M."/>
            <person name="Quevillon E."/>
            <person name="Sharon A."/>
            <person name="Simon A."/>
            <person name="ten Have A."/>
            <person name="Tudzynski B."/>
            <person name="Tudzynski P."/>
            <person name="Wincker P."/>
            <person name="Andrew M."/>
            <person name="Anthouard V."/>
            <person name="Beever R.E."/>
            <person name="Beffa R."/>
            <person name="Benoit I."/>
            <person name="Bouzid O."/>
            <person name="Brault B."/>
            <person name="Chen Z."/>
            <person name="Choquer M."/>
            <person name="Collemare J."/>
            <person name="Cotton P."/>
            <person name="Danchin E.G."/>
            <person name="Da Silva C."/>
            <person name="Gautier A."/>
            <person name="Giraud C."/>
            <person name="Giraud T."/>
            <person name="Gonzalez C."/>
            <person name="Grossetete S."/>
            <person name="Gueldener U."/>
            <person name="Henrissat B."/>
            <person name="Howlett B.J."/>
            <person name="Kodira C."/>
            <person name="Kretschmer M."/>
            <person name="Lappartient A."/>
            <person name="Leroch M."/>
            <person name="Levis C."/>
            <person name="Mauceli E."/>
            <person name="Neuveglise C."/>
            <person name="Oeser B."/>
            <person name="Pearson M."/>
            <person name="Poulain J."/>
            <person name="Poussereau N."/>
            <person name="Quesneville H."/>
            <person name="Rascle C."/>
            <person name="Schumacher J."/>
            <person name="Segurens B."/>
            <person name="Sexton A."/>
            <person name="Silva E."/>
            <person name="Sirven C."/>
            <person name="Soanes D.M."/>
            <person name="Talbot N.J."/>
            <person name="Templeton M."/>
            <person name="Yandava C."/>
            <person name="Yarden O."/>
            <person name="Zeng Q."/>
            <person name="Rollins J.A."/>
            <person name="Lebrun M.-H."/>
            <person name="Dickman M."/>
        </authorList>
    </citation>
    <scope>NUCLEOTIDE SEQUENCE [LARGE SCALE GENOMIC DNA]</scope>
    <source>
        <strain>B05.10</strain>
    </source>
</reference>
<reference key="2">
    <citation type="journal article" date="2012" name="Eukaryot. Cell">
        <title>Genome update of Botrytis cinerea strains B05.10 and T4.</title>
        <authorList>
            <person name="Staats M."/>
            <person name="van Kan J.A.L."/>
        </authorList>
    </citation>
    <scope>NUCLEOTIDE SEQUENCE [LARGE SCALE GENOMIC DNA]</scope>
    <scope>GENOME REANNOTATION</scope>
    <source>
        <strain>B05.10</strain>
    </source>
</reference>
<reference key="3">
    <citation type="journal article" date="2017" name="Mol. Plant Pathol.">
        <title>A gapless genome sequence of the fungus Botrytis cinerea.</title>
        <authorList>
            <person name="van Kan J.A.L."/>
            <person name="Stassen J.H.M."/>
            <person name="Mosbach A."/>
            <person name="van der Lee T.A.J."/>
            <person name="Faino L."/>
            <person name="Farmer A.D."/>
            <person name="Papasotiriou D.G."/>
            <person name="Zhou S."/>
            <person name="Seidl M.F."/>
            <person name="Cottam E."/>
            <person name="Edel D."/>
            <person name="Hahn M."/>
            <person name="Schwartz D.C."/>
            <person name="Dietrich R.A."/>
            <person name="Widdison S."/>
            <person name="Scalliet G."/>
        </authorList>
    </citation>
    <scope>NUCLEOTIDE SEQUENCE [LARGE SCALE GENOMIC DNA] (ISOFORMS 1 AND 2)</scope>
    <scope>GENOME REANNOTATION</scope>
    <source>
        <strain>B05.10</strain>
    </source>
</reference>
<proteinExistence type="inferred from homology"/>